<gene>
    <name type="primary">SAMC1</name>
    <name type="synonym">SAMT1</name>
    <name type="ordered locus">At4g39460</name>
    <name type="ORF">F23K16.90</name>
</gene>
<comment type="function">
    <text evidence="3 4">Transporter involved in exchange reactions through membranes. Has a low uniporter activity. Specifically mediates the transport of S-adenosylmethionine (SAM) and its closest analogs. Probably involved in the uptake of SAM in exchange for S-adenosylhomocysteine (SAHC), which is produced from SAM in the mitochondrial matrix and plastidial stroma by methyltransferase activities.</text>
</comment>
<comment type="activity regulation">
    <text evidence="3">Inhibited strongly by tannic acid, bromocresol purple, mercuric chloride, mersalyl, p-hydroxymercuribenzoate, S-adenosylhomocysteine, S-adenosylcysteine and adenosylornithine, and to a lesser extent by N-ethylmaleimide, bathophenanthroline and pyridoxal-5'-P.</text>
</comment>
<comment type="biophysicochemical properties">
    <kinetics>
        <KM evidence="3">95 uM for the SAM/SAM exchange</KM>
        <Vmax evidence="3">1.2 mmol/min/g enzyme</Vmax>
    </kinetics>
</comment>
<comment type="subcellular location">
    <subcellularLocation>
        <location>Mitochondrion membrane</location>
        <topology>Multi-pass membrane protein</topology>
    </subcellularLocation>
    <subcellularLocation>
        <location>Plastid</location>
        <location>Chloroplast membrane</location>
        <topology>Multi-pass membrane protein</topology>
    </subcellularLocation>
    <text evidence="3 4">Detected in chloroplast envelope, but not in thylakoid membranes or in chloroplast stroma (PubMed:17098813). According to another report, localization is restricted to the mitochondria (PubMed:16950860).</text>
</comment>
<comment type="tissue specificity">
    <text evidence="3 4">Expressed in seedlings, cotyledons, leaves and flowers. Lower levels of expression in stems and roots. Not detected in senescent leaves, petals and pollen grains.</text>
</comment>
<comment type="disruption phenotype">
    <text evidence="3 4">Severely growth-retarded phenotype and reduced chlorophyll and plastoquinone contents. Unable to germinate when homozygous.</text>
</comment>
<comment type="similarity">
    <text evidence="5">Belongs to the mitochondrial carrier (TC 2.A.29) family.</text>
</comment>
<comment type="sequence caution" evidence="5">
    <conflict type="erroneous gene model prediction">
        <sequence resource="EMBL-CDS" id="CAB44681"/>
    </conflict>
</comment>
<comment type="sequence caution" evidence="5">
    <conflict type="erroneous gene model prediction">
        <sequence resource="EMBL-CDS" id="CAB80609"/>
    </conflict>
</comment>
<protein>
    <recommendedName>
        <fullName>S-adenosylmethionine carrier 1, chloroplastic/mitochondrial</fullName>
    </recommendedName>
    <alternativeName>
        <fullName>S-adenosylmethionine transporter 1</fullName>
        <shortName>AtSAMT1</shortName>
    </alternativeName>
</protein>
<feature type="transit peptide" description="Chloroplast and mitochondrion" evidence="2">
    <location>
        <begin position="1"/>
        <end position="38"/>
    </location>
</feature>
<feature type="chain" id="PRO_0000424771" description="S-adenosylmethionine carrier 1, chloroplastic/mitochondrial">
    <location>
        <begin position="39"/>
        <end position="325"/>
    </location>
</feature>
<feature type="transmembrane region" description="Helical" evidence="1">
    <location>
        <begin position="55"/>
        <end position="75"/>
    </location>
</feature>
<feature type="transmembrane region" description="Helical" evidence="1">
    <location>
        <begin position="97"/>
        <end position="117"/>
    </location>
</feature>
<feature type="transmembrane region" description="Helical" evidence="1">
    <location>
        <begin position="132"/>
        <end position="152"/>
    </location>
</feature>
<feature type="transmembrane region" description="Helical" evidence="1">
    <location>
        <begin position="230"/>
        <end position="250"/>
    </location>
</feature>
<feature type="transmembrane region" description="Helical" evidence="1">
    <location>
        <begin position="285"/>
        <end position="305"/>
    </location>
</feature>
<feature type="repeat" description="Solcar 1">
    <location>
        <begin position="52"/>
        <end position="124"/>
    </location>
</feature>
<feature type="repeat" description="Solcar 2">
    <location>
        <begin position="133"/>
        <end position="215"/>
    </location>
</feature>
<feature type="repeat" description="Solcar 3">
    <location>
        <begin position="228"/>
        <end position="310"/>
    </location>
</feature>
<keyword id="KW-0150">Chloroplast</keyword>
<keyword id="KW-0472">Membrane</keyword>
<keyword id="KW-0496">Mitochondrion</keyword>
<keyword id="KW-0934">Plastid</keyword>
<keyword id="KW-1185">Reference proteome</keyword>
<keyword id="KW-0677">Repeat</keyword>
<keyword id="KW-0949">S-adenosyl-L-methionine</keyword>
<keyword id="KW-0809">Transit peptide</keyword>
<keyword id="KW-0812">Transmembrane</keyword>
<keyword id="KW-1133">Transmembrane helix</keyword>
<keyword id="KW-0813">Transport</keyword>
<sequence>MAPLTLSVDVKSSSATSHDVSKRVMQSSQLKINKGFFASVNTQEDKPFDFFRTLFEGFIAGGTAGVVVETALYPIDTIKTRLQAARGGGKIVLKGLYSGLAGNIAGVLPASALFVGVYEPTKQKLLKTFPDHLSAVAHLTAGAIGGLAASLIRVPTEVVKQRMQTGQFTSAPSAVRMIASKEGFRGLYAGYRSFLLRDLPFDAIQFCIYEQLCLGYKKAARRELSDPENALIGAFAGALTGAVTTPLDVIKTRLMVQGSAKQYQGIVDCVQTIVREEGAPALLKGIGPRVLWIGIGGSIFFGVLESTKRTLAQRRPNTVKETKEE</sequence>
<organism>
    <name type="scientific">Arabidopsis thaliana</name>
    <name type="common">Mouse-ear cress</name>
    <dbReference type="NCBI Taxonomy" id="3702"/>
    <lineage>
        <taxon>Eukaryota</taxon>
        <taxon>Viridiplantae</taxon>
        <taxon>Streptophyta</taxon>
        <taxon>Embryophyta</taxon>
        <taxon>Tracheophyta</taxon>
        <taxon>Spermatophyta</taxon>
        <taxon>Magnoliopsida</taxon>
        <taxon>eudicotyledons</taxon>
        <taxon>Gunneridae</taxon>
        <taxon>Pentapetalae</taxon>
        <taxon>rosids</taxon>
        <taxon>malvids</taxon>
        <taxon>Brassicales</taxon>
        <taxon>Brassicaceae</taxon>
        <taxon>Camelineae</taxon>
        <taxon>Arabidopsis</taxon>
    </lineage>
</organism>
<accession>Q94AG6</accession>
<accession>Q9SVB2</accession>
<reference key="1">
    <citation type="journal article" date="2006" name="Plant Cell">
        <title>Arabidopsis SAMT1 defines a plastid transporter regulating plastid biogenesis and plant development.</title>
        <authorList>
            <person name="Bouvier F."/>
            <person name="Linka N."/>
            <person name="Isner J.C."/>
            <person name="Mutterer J."/>
            <person name="Weber A.P.M."/>
            <person name="Camara B."/>
        </authorList>
    </citation>
    <scope>NUCLEOTIDE SEQUENCE [MRNA]</scope>
    <scope>TISSUE SPECIFICITY</scope>
    <scope>SUBCELLULAR LOCATION</scope>
    <scope>FUNCTION</scope>
    <scope>SUBSTRATE SPECIFICITY</scope>
    <scope>DISRUPTION PHENOTYPE</scope>
</reference>
<reference key="2">
    <citation type="journal article" date="2006" name="Plant Physiol.">
        <title>Molecular identification of an Arabidopsis S-adenosylmethionine transporter. Analysis of organ distribution, bacterial expression, reconstitution into liposomes, and functional characterization.</title>
        <authorList>
            <person name="Palmieri L."/>
            <person name="Arrigoni R."/>
            <person name="Blanco E."/>
            <person name="Carrari F."/>
            <person name="Zanor M.I."/>
            <person name="Studart-Guimareas C."/>
            <person name="Fernie A.R."/>
            <person name="Palmieri F."/>
        </authorList>
    </citation>
    <scope>NUCLEOTIDE SEQUENCE [MRNA]</scope>
    <scope>TISSUE SPECIFICITY</scope>
    <scope>FUNCTION</scope>
    <scope>ACTIVITY REGULATION</scope>
    <scope>BIOPHYSICOCHEMICAL PROPERTIES</scope>
    <scope>SUBCELLULAR LOCATION</scope>
    <scope>DISRUPTION PHENOTYPE</scope>
    <source>
        <strain>cv. Landsberg erecta</strain>
    </source>
</reference>
<reference key="3">
    <citation type="journal article" date="1999" name="Nature">
        <title>Sequence and analysis of chromosome 4 of the plant Arabidopsis thaliana.</title>
        <authorList>
            <person name="Mayer K.F.X."/>
            <person name="Schueller C."/>
            <person name="Wambutt R."/>
            <person name="Murphy G."/>
            <person name="Volckaert G."/>
            <person name="Pohl T."/>
            <person name="Duesterhoeft A."/>
            <person name="Stiekema W."/>
            <person name="Entian K.-D."/>
            <person name="Terryn N."/>
            <person name="Harris B."/>
            <person name="Ansorge W."/>
            <person name="Brandt P."/>
            <person name="Grivell L.A."/>
            <person name="Rieger M."/>
            <person name="Weichselgartner M."/>
            <person name="de Simone V."/>
            <person name="Obermaier B."/>
            <person name="Mache R."/>
            <person name="Mueller M."/>
            <person name="Kreis M."/>
            <person name="Delseny M."/>
            <person name="Puigdomenech P."/>
            <person name="Watson M."/>
            <person name="Schmidtheini T."/>
            <person name="Reichert B."/>
            <person name="Portetelle D."/>
            <person name="Perez-Alonso M."/>
            <person name="Boutry M."/>
            <person name="Bancroft I."/>
            <person name="Vos P."/>
            <person name="Hoheisel J."/>
            <person name="Zimmermann W."/>
            <person name="Wedler H."/>
            <person name="Ridley P."/>
            <person name="Langham S.-A."/>
            <person name="McCullagh B."/>
            <person name="Bilham L."/>
            <person name="Robben J."/>
            <person name="van der Schueren J."/>
            <person name="Grymonprez B."/>
            <person name="Chuang Y.-J."/>
            <person name="Vandenbussche F."/>
            <person name="Braeken M."/>
            <person name="Weltjens I."/>
            <person name="Voet M."/>
            <person name="Bastiaens I."/>
            <person name="Aert R."/>
            <person name="Defoor E."/>
            <person name="Weitzenegger T."/>
            <person name="Bothe G."/>
            <person name="Ramsperger U."/>
            <person name="Hilbert H."/>
            <person name="Braun M."/>
            <person name="Holzer E."/>
            <person name="Brandt A."/>
            <person name="Peters S."/>
            <person name="van Staveren M."/>
            <person name="Dirkse W."/>
            <person name="Mooijman P."/>
            <person name="Klein Lankhorst R."/>
            <person name="Rose M."/>
            <person name="Hauf J."/>
            <person name="Koetter P."/>
            <person name="Berneiser S."/>
            <person name="Hempel S."/>
            <person name="Feldpausch M."/>
            <person name="Lamberth S."/>
            <person name="Van den Daele H."/>
            <person name="De Keyser A."/>
            <person name="Buysshaert C."/>
            <person name="Gielen J."/>
            <person name="Villarroel R."/>
            <person name="De Clercq R."/>
            <person name="van Montagu M."/>
            <person name="Rogers J."/>
            <person name="Cronin A."/>
            <person name="Quail M.A."/>
            <person name="Bray-Allen S."/>
            <person name="Clark L."/>
            <person name="Doggett J."/>
            <person name="Hall S."/>
            <person name="Kay M."/>
            <person name="Lennard N."/>
            <person name="McLay K."/>
            <person name="Mayes R."/>
            <person name="Pettett A."/>
            <person name="Rajandream M.A."/>
            <person name="Lyne M."/>
            <person name="Benes V."/>
            <person name="Rechmann S."/>
            <person name="Borkova D."/>
            <person name="Bloecker H."/>
            <person name="Scharfe M."/>
            <person name="Grimm M."/>
            <person name="Loehnert T.-H."/>
            <person name="Dose S."/>
            <person name="de Haan M."/>
            <person name="Maarse A.C."/>
            <person name="Schaefer M."/>
            <person name="Mueller-Auer S."/>
            <person name="Gabel C."/>
            <person name="Fuchs M."/>
            <person name="Fartmann B."/>
            <person name="Granderath K."/>
            <person name="Dauner D."/>
            <person name="Herzl A."/>
            <person name="Neumann S."/>
            <person name="Argiriou A."/>
            <person name="Vitale D."/>
            <person name="Liguori R."/>
            <person name="Piravandi E."/>
            <person name="Massenet O."/>
            <person name="Quigley F."/>
            <person name="Clabauld G."/>
            <person name="Muendlein A."/>
            <person name="Felber R."/>
            <person name="Schnabl S."/>
            <person name="Hiller R."/>
            <person name="Schmidt W."/>
            <person name="Lecharny A."/>
            <person name="Aubourg S."/>
            <person name="Chefdor F."/>
            <person name="Cooke R."/>
            <person name="Berger C."/>
            <person name="Monfort A."/>
            <person name="Casacuberta E."/>
            <person name="Gibbons T."/>
            <person name="Weber N."/>
            <person name="Vandenbol M."/>
            <person name="Bargues M."/>
            <person name="Terol J."/>
            <person name="Torres A."/>
            <person name="Perez-Perez A."/>
            <person name="Purnelle B."/>
            <person name="Bent E."/>
            <person name="Johnson S."/>
            <person name="Tacon D."/>
            <person name="Jesse T."/>
            <person name="Heijnen L."/>
            <person name="Schwarz S."/>
            <person name="Scholler P."/>
            <person name="Heber S."/>
            <person name="Francs P."/>
            <person name="Bielke C."/>
            <person name="Frishman D."/>
            <person name="Haase D."/>
            <person name="Lemcke K."/>
            <person name="Mewes H.-W."/>
            <person name="Stocker S."/>
            <person name="Zaccaria P."/>
            <person name="Bevan M."/>
            <person name="Wilson R.K."/>
            <person name="de la Bastide M."/>
            <person name="Habermann K."/>
            <person name="Parnell L."/>
            <person name="Dedhia N."/>
            <person name="Gnoj L."/>
            <person name="Schutz K."/>
            <person name="Huang E."/>
            <person name="Spiegel L."/>
            <person name="Sekhon M."/>
            <person name="Murray J."/>
            <person name="Sheet P."/>
            <person name="Cordes M."/>
            <person name="Abu-Threideh J."/>
            <person name="Stoneking T."/>
            <person name="Kalicki J."/>
            <person name="Graves T."/>
            <person name="Harmon G."/>
            <person name="Edwards J."/>
            <person name="Latreille P."/>
            <person name="Courtney L."/>
            <person name="Cloud J."/>
            <person name="Abbott A."/>
            <person name="Scott K."/>
            <person name="Johnson D."/>
            <person name="Minx P."/>
            <person name="Bentley D."/>
            <person name="Fulton B."/>
            <person name="Miller N."/>
            <person name="Greco T."/>
            <person name="Kemp K."/>
            <person name="Kramer J."/>
            <person name="Fulton L."/>
            <person name="Mardis E."/>
            <person name="Dante M."/>
            <person name="Pepin K."/>
            <person name="Hillier L.W."/>
            <person name="Nelson J."/>
            <person name="Spieth J."/>
            <person name="Ryan E."/>
            <person name="Andrews S."/>
            <person name="Geisel C."/>
            <person name="Layman D."/>
            <person name="Du H."/>
            <person name="Ali J."/>
            <person name="Berghoff A."/>
            <person name="Jones K."/>
            <person name="Drone K."/>
            <person name="Cotton M."/>
            <person name="Joshu C."/>
            <person name="Antonoiu B."/>
            <person name="Zidanic M."/>
            <person name="Strong C."/>
            <person name="Sun H."/>
            <person name="Lamar B."/>
            <person name="Yordan C."/>
            <person name="Ma P."/>
            <person name="Zhong J."/>
            <person name="Preston R."/>
            <person name="Vil D."/>
            <person name="Shekher M."/>
            <person name="Matero A."/>
            <person name="Shah R."/>
            <person name="Swaby I.K."/>
            <person name="O'Shaughnessy A."/>
            <person name="Rodriguez M."/>
            <person name="Hoffman J."/>
            <person name="Till S."/>
            <person name="Granat S."/>
            <person name="Shohdy N."/>
            <person name="Hasegawa A."/>
            <person name="Hameed A."/>
            <person name="Lodhi M."/>
            <person name="Johnson A."/>
            <person name="Chen E."/>
            <person name="Marra M.A."/>
            <person name="Martienssen R."/>
            <person name="McCombie W.R."/>
        </authorList>
    </citation>
    <scope>NUCLEOTIDE SEQUENCE [LARGE SCALE GENOMIC DNA]</scope>
    <source>
        <strain>cv. Columbia</strain>
    </source>
</reference>
<reference key="4">
    <citation type="journal article" date="2003" name="Science">
        <title>Empirical analysis of transcriptional activity in the Arabidopsis genome.</title>
        <authorList>
            <person name="Yamada K."/>
            <person name="Lim J."/>
            <person name="Dale J.M."/>
            <person name="Chen H."/>
            <person name="Shinn P."/>
            <person name="Palm C.J."/>
            <person name="Southwick A.M."/>
            <person name="Wu H.C."/>
            <person name="Kim C.J."/>
            <person name="Nguyen M."/>
            <person name="Pham P.K."/>
            <person name="Cheuk R.F."/>
            <person name="Karlin-Newmann G."/>
            <person name="Liu S.X."/>
            <person name="Lam B."/>
            <person name="Sakano H."/>
            <person name="Wu T."/>
            <person name="Yu G."/>
            <person name="Miranda M."/>
            <person name="Quach H.L."/>
            <person name="Tripp M."/>
            <person name="Chang C.H."/>
            <person name="Lee J.M."/>
            <person name="Toriumi M.J."/>
            <person name="Chan M.M."/>
            <person name="Tang C.C."/>
            <person name="Onodera C.S."/>
            <person name="Deng J.M."/>
            <person name="Akiyama K."/>
            <person name="Ansari Y."/>
            <person name="Arakawa T."/>
            <person name="Banh J."/>
            <person name="Banno F."/>
            <person name="Bowser L."/>
            <person name="Brooks S.Y."/>
            <person name="Carninci P."/>
            <person name="Chao Q."/>
            <person name="Choy N."/>
            <person name="Enju A."/>
            <person name="Goldsmith A.D."/>
            <person name="Gurjal M."/>
            <person name="Hansen N.F."/>
            <person name="Hayashizaki Y."/>
            <person name="Johnson-Hopson C."/>
            <person name="Hsuan V.W."/>
            <person name="Iida K."/>
            <person name="Karnes M."/>
            <person name="Khan S."/>
            <person name="Koesema E."/>
            <person name="Ishida J."/>
            <person name="Jiang P.X."/>
            <person name="Jones T."/>
            <person name="Kawai J."/>
            <person name="Kamiya A."/>
            <person name="Meyers C."/>
            <person name="Nakajima M."/>
            <person name="Narusaka M."/>
            <person name="Seki M."/>
            <person name="Sakurai T."/>
            <person name="Satou M."/>
            <person name="Tamse R."/>
            <person name="Vaysberg M."/>
            <person name="Wallender E.K."/>
            <person name="Wong C."/>
            <person name="Yamamura Y."/>
            <person name="Yuan S."/>
            <person name="Shinozaki K."/>
            <person name="Davis R.W."/>
            <person name="Theologis A."/>
            <person name="Ecker J.R."/>
        </authorList>
    </citation>
    <scope>NUCLEOTIDE SEQUENCE [LARGE SCALE MRNA]</scope>
    <source>
        <strain>cv. Columbia</strain>
    </source>
</reference>
<reference key="5">
    <citation type="journal article" date="2017" name="Plant J.">
        <title>Araport11: a complete reannotation of the Arabidopsis thaliana reference genome.</title>
        <authorList>
            <person name="Cheng C.Y."/>
            <person name="Krishnakumar V."/>
            <person name="Chan A.P."/>
            <person name="Thibaud-Nissen F."/>
            <person name="Schobel S."/>
            <person name="Town C.D."/>
        </authorList>
    </citation>
    <scope>GENOME REANNOTATION</scope>
    <source>
        <strain>cv. Columbia</strain>
    </source>
</reference>
<reference key="6">
    <citation type="journal article" date="2003" name="Mol. Cell. Proteomics">
        <title>Proteomics of the chloroplast envelope membranes from Arabidopsis thaliana.</title>
        <authorList>
            <person name="Ferro M."/>
            <person name="Salvi D."/>
            <person name="Brugiere S."/>
            <person name="Miras S."/>
            <person name="Kowalski S."/>
            <person name="Louwagie M."/>
            <person name="Garin J."/>
            <person name="Joyard J."/>
            <person name="Rolland N."/>
        </authorList>
    </citation>
    <scope>CLEAVAGE OF TRANSIT PEPTIDE AFTER ALA-38</scope>
    <scope>IDENTIFICATION BY MASS SPECTROMETRY</scope>
    <scope>SUBCELLULAR LOCATION [LARGE SCALE ANALYSIS]</scope>
    <source>
        <strain>cv. Wassilewskija</strain>
    </source>
</reference>
<dbReference type="EMBL" id="AJ627908">
    <property type="protein sequence ID" value="CAF29517.1"/>
    <property type="molecule type" value="mRNA"/>
</dbReference>
<dbReference type="EMBL" id="AM260490">
    <property type="protein sequence ID" value="CAJ91123.1"/>
    <property type="molecule type" value="mRNA"/>
</dbReference>
<dbReference type="EMBL" id="AL078620">
    <property type="protein sequence ID" value="CAB44681.1"/>
    <property type="status" value="ALT_SEQ"/>
    <property type="molecule type" value="Genomic_DNA"/>
</dbReference>
<dbReference type="EMBL" id="AL161595">
    <property type="protein sequence ID" value="CAB80609.1"/>
    <property type="status" value="ALT_SEQ"/>
    <property type="molecule type" value="Genomic_DNA"/>
</dbReference>
<dbReference type="EMBL" id="CP002687">
    <property type="protein sequence ID" value="AEE87074.1"/>
    <property type="molecule type" value="Genomic_DNA"/>
</dbReference>
<dbReference type="EMBL" id="CP002687">
    <property type="protein sequence ID" value="AEE87075.1"/>
    <property type="molecule type" value="Genomic_DNA"/>
</dbReference>
<dbReference type="EMBL" id="CP002687">
    <property type="protein sequence ID" value="ANM66368.1"/>
    <property type="molecule type" value="Genomic_DNA"/>
</dbReference>
<dbReference type="EMBL" id="AY046052">
    <property type="protein sequence ID" value="AAK76726.1"/>
    <property type="molecule type" value="mRNA"/>
</dbReference>
<dbReference type="EMBL" id="AY079349">
    <property type="protein sequence ID" value="AAL85080.1"/>
    <property type="molecule type" value="mRNA"/>
</dbReference>
<dbReference type="PIR" id="T09362">
    <property type="entry name" value="T09362"/>
</dbReference>
<dbReference type="RefSeq" id="NP_001190968.1">
    <property type="nucleotide sequence ID" value="NM_001204039.1"/>
</dbReference>
<dbReference type="RefSeq" id="NP_001328265.1">
    <property type="nucleotide sequence ID" value="NM_001342543.1"/>
</dbReference>
<dbReference type="RefSeq" id="NP_568060.1">
    <property type="nucleotide sequence ID" value="NM_120106.3"/>
</dbReference>
<dbReference type="SMR" id="Q94AG6"/>
<dbReference type="FunCoup" id="Q94AG6">
    <property type="interactions" value="3504"/>
</dbReference>
<dbReference type="IntAct" id="Q94AG6">
    <property type="interactions" value="1"/>
</dbReference>
<dbReference type="STRING" id="3702.Q94AG6"/>
<dbReference type="TCDB" id="2.A.29.18.2">
    <property type="family name" value="the mitochondrial carrier (mc) family"/>
</dbReference>
<dbReference type="iPTMnet" id="Q94AG6"/>
<dbReference type="PaxDb" id="3702-AT4G39460.2"/>
<dbReference type="ProteomicsDB" id="232731"/>
<dbReference type="EnsemblPlants" id="AT4G39460.1">
    <property type="protein sequence ID" value="AT4G39460.1"/>
    <property type="gene ID" value="AT4G39460"/>
</dbReference>
<dbReference type="EnsemblPlants" id="AT4G39460.2">
    <property type="protein sequence ID" value="AT4G39460.2"/>
    <property type="gene ID" value="AT4G39460"/>
</dbReference>
<dbReference type="EnsemblPlants" id="AT4G39460.3">
    <property type="protein sequence ID" value="AT4G39460.3"/>
    <property type="gene ID" value="AT4G39460"/>
</dbReference>
<dbReference type="GeneID" id="830101"/>
<dbReference type="Gramene" id="AT4G39460.1">
    <property type="protein sequence ID" value="AT4G39460.1"/>
    <property type="gene ID" value="AT4G39460"/>
</dbReference>
<dbReference type="Gramene" id="AT4G39460.2">
    <property type="protein sequence ID" value="AT4G39460.2"/>
    <property type="gene ID" value="AT4G39460"/>
</dbReference>
<dbReference type="Gramene" id="AT4G39460.3">
    <property type="protein sequence ID" value="AT4G39460.3"/>
    <property type="gene ID" value="AT4G39460"/>
</dbReference>
<dbReference type="KEGG" id="ath:AT4G39460"/>
<dbReference type="Araport" id="AT4G39460"/>
<dbReference type="TAIR" id="AT4G39460">
    <property type="gene designation" value="SAMC1"/>
</dbReference>
<dbReference type="eggNOG" id="KOG0768">
    <property type="taxonomic scope" value="Eukaryota"/>
</dbReference>
<dbReference type="HOGENOM" id="CLU_015166_3_0_1"/>
<dbReference type="InParanoid" id="Q94AG6"/>
<dbReference type="OMA" id="IGPRTMW"/>
<dbReference type="PhylomeDB" id="Q94AG6"/>
<dbReference type="SABIO-RK" id="Q94AG6"/>
<dbReference type="PRO" id="PR:Q94AG6"/>
<dbReference type="Proteomes" id="UP000006548">
    <property type="component" value="Chromosome 4"/>
</dbReference>
<dbReference type="ExpressionAtlas" id="Q94AG6">
    <property type="expression patterns" value="baseline and differential"/>
</dbReference>
<dbReference type="GO" id="GO:0009507">
    <property type="term" value="C:chloroplast"/>
    <property type="evidence" value="ECO:0000314"/>
    <property type="project" value="TAIR"/>
</dbReference>
<dbReference type="GO" id="GO:0009941">
    <property type="term" value="C:chloroplast envelope"/>
    <property type="evidence" value="ECO:0007005"/>
    <property type="project" value="TAIR"/>
</dbReference>
<dbReference type="GO" id="GO:0031969">
    <property type="term" value="C:chloroplast membrane"/>
    <property type="evidence" value="ECO:0007669"/>
    <property type="project" value="UniProtKB-SubCell"/>
</dbReference>
<dbReference type="GO" id="GO:0031966">
    <property type="term" value="C:mitochondrial membrane"/>
    <property type="evidence" value="ECO:0007669"/>
    <property type="project" value="UniProtKB-SubCell"/>
</dbReference>
<dbReference type="GO" id="GO:0005886">
    <property type="term" value="C:plasma membrane"/>
    <property type="evidence" value="ECO:0007005"/>
    <property type="project" value="TAIR"/>
</dbReference>
<dbReference type="GO" id="GO:0009536">
    <property type="term" value="C:plastid"/>
    <property type="evidence" value="ECO:0007005"/>
    <property type="project" value="TAIR"/>
</dbReference>
<dbReference type="GO" id="GO:0000095">
    <property type="term" value="F:S-adenosyl-L-methionine transmembrane transporter activity"/>
    <property type="evidence" value="ECO:0000314"/>
    <property type="project" value="TAIR"/>
</dbReference>
<dbReference type="GO" id="GO:0009658">
    <property type="term" value="P:chloroplast organization"/>
    <property type="evidence" value="ECO:0000315"/>
    <property type="project" value="TAIR"/>
</dbReference>
<dbReference type="GO" id="GO:0015805">
    <property type="term" value="P:S-adenosyl-L-methionine transport"/>
    <property type="evidence" value="ECO:0000314"/>
    <property type="project" value="TAIR"/>
</dbReference>
<dbReference type="FunFam" id="1.50.40.10:FF:000038">
    <property type="entry name" value="S-adenosylmethionine carrier 1 chloroplastic/mitochondrial"/>
    <property type="match status" value="1"/>
</dbReference>
<dbReference type="Gene3D" id="1.50.40.10">
    <property type="entry name" value="Mitochondrial carrier domain"/>
    <property type="match status" value="1"/>
</dbReference>
<dbReference type="InterPro" id="IPR002067">
    <property type="entry name" value="Mit_carrier"/>
</dbReference>
<dbReference type="InterPro" id="IPR018108">
    <property type="entry name" value="Mitochondrial_sb/sol_carrier"/>
</dbReference>
<dbReference type="InterPro" id="IPR023395">
    <property type="entry name" value="Mt_carrier_dom_sf"/>
</dbReference>
<dbReference type="PANTHER" id="PTHR45667">
    <property type="entry name" value="S-ADENOSYLMETHIONINE MITOCHONDRIAL CARRIER PROTEIN"/>
    <property type="match status" value="1"/>
</dbReference>
<dbReference type="Pfam" id="PF00153">
    <property type="entry name" value="Mito_carr"/>
    <property type="match status" value="3"/>
</dbReference>
<dbReference type="PRINTS" id="PR00926">
    <property type="entry name" value="MITOCARRIER"/>
</dbReference>
<dbReference type="SUPFAM" id="SSF103506">
    <property type="entry name" value="Mitochondrial carrier"/>
    <property type="match status" value="1"/>
</dbReference>
<dbReference type="PROSITE" id="PS50920">
    <property type="entry name" value="SOLCAR"/>
    <property type="match status" value="3"/>
</dbReference>
<name>SAMC1_ARATH</name>
<proteinExistence type="evidence at protein level"/>
<evidence type="ECO:0000255" key="1"/>
<evidence type="ECO:0000269" key="2">
    <source>
    </source>
</evidence>
<evidence type="ECO:0000269" key="3">
    <source>
    </source>
</evidence>
<evidence type="ECO:0000269" key="4">
    <source>
    </source>
</evidence>
<evidence type="ECO:0000305" key="5"/>